<accession>Q2QS13</accession>
<accession>A0A0N7KTZ5</accession>
<keyword id="KW-0520">NAD</keyword>
<keyword id="KW-0560">Oxidoreductase</keyword>
<keyword id="KW-0597">Phosphoprotein</keyword>
<keyword id="KW-1185">Reference proteome</keyword>
<dbReference type="EC" id="1.1.1.22"/>
<dbReference type="EMBL" id="DP000011">
    <property type="protein sequence ID" value="ABA97737.1"/>
    <property type="molecule type" value="Genomic_DNA"/>
</dbReference>
<dbReference type="EMBL" id="DP000011">
    <property type="protein sequence ID" value="ABA97738.1"/>
    <property type="molecule type" value="Genomic_DNA"/>
</dbReference>
<dbReference type="EMBL" id="DP000011">
    <property type="protein sequence ID" value="ABG22007.1"/>
    <property type="molecule type" value="Genomic_DNA"/>
</dbReference>
<dbReference type="EMBL" id="AP008218">
    <property type="protein sequence ID" value="BAF29725.1"/>
    <property type="molecule type" value="Genomic_DNA"/>
</dbReference>
<dbReference type="EMBL" id="AP014968">
    <property type="protein sequence ID" value="BAT16994.1"/>
    <property type="molecule type" value="Genomic_DNA"/>
</dbReference>
<dbReference type="EMBL" id="CM000149">
    <property type="protein sequence ID" value="EEE53159.1"/>
    <property type="molecule type" value="Genomic_DNA"/>
</dbReference>
<dbReference type="EMBL" id="AK099096">
    <property type="protein sequence ID" value="BAG93921.1"/>
    <property type="molecule type" value="mRNA"/>
</dbReference>
<dbReference type="EMBL" id="AK103919">
    <property type="protein sequence ID" value="BAG96319.1"/>
    <property type="molecule type" value="mRNA"/>
</dbReference>
<dbReference type="RefSeq" id="XP_015620482.1">
    <property type="nucleotide sequence ID" value="XM_015764996.1"/>
</dbReference>
<dbReference type="RefSeq" id="XP_015620483.1">
    <property type="nucleotide sequence ID" value="XM_015764997.1"/>
</dbReference>
<dbReference type="RefSeq" id="XP_015620484.1">
    <property type="nucleotide sequence ID" value="XM_015764998.1"/>
</dbReference>
<dbReference type="RefSeq" id="XP_015620486.1">
    <property type="nucleotide sequence ID" value="XM_015765000.1"/>
</dbReference>
<dbReference type="SMR" id="Q2QS13"/>
<dbReference type="FunCoup" id="Q2QS13">
    <property type="interactions" value="2464"/>
</dbReference>
<dbReference type="STRING" id="39947.Q2QS13"/>
<dbReference type="PaxDb" id="39947-Q2QS13"/>
<dbReference type="EnsemblPlants" id="Os12t0443600-01">
    <property type="protein sequence ID" value="Os12t0443600-01"/>
    <property type="gene ID" value="Os12g0443600"/>
</dbReference>
<dbReference type="EnsemblPlants" id="Os12t0443600-02">
    <property type="protein sequence ID" value="Os12t0443600-02"/>
    <property type="gene ID" value="Os12g0443600"/>
</dbReference>
<dbReference type="GeneID" id="4352147"/>
<dbReference type="Gramene" id="Os12t0443600-01">
    <property type="protein sequence ID" value="Os12t0443600-01"/>
    <property type="gene ID" value="Os12g0443600"/>
</dbReference>
<dbReference type="Gramene" id="Os12t0443600-02">
    <property type="protein sequence ID" value="Os12t0443600-02"/>
    <property type="gene ID" value="Os12g0443600"/>
</dbReference>
<dbReference type="KEGG" id="dosa:Os12g0443600"/>
<dbReference type="KEGG" id="osa:4352147"/>
<dbReference type="eggNOG" id="KOG2666">
    <property type="taxonomic scope" value="Eukaryota"/>
</dbReference>
<dbReference type="HOGENOM" id="CLU_023810_7_0_1"/>
<dbReference type="InParanoid" id="Q2QS13"/>
<dbReference type="OMA" id="CFIAVGT"/>
<dbReference type="OrthoDB" id="5059218at2759"/>
<dbReference type="PlantReactome" id="R-OSA-1119452">
    <property type="pathway name" value="Galactose degradation II"/>
</dbReference>
<dbReference type="PlantReactome" id="R-OSA-1119563">
    <property type="pathway name" value="UDP-D-xylose biosynthesis"/>
</dbReference>
<dbReference type="PlantReactome" id="R-OSA-1119574">
    <property type="pathway name" value="UDP-L-arabinose biosynthesis and transport"/>
</dbReference>
<dbReference type="UniPathway" id="UPA00038">
    <property type="reaction ID" value="UER00491"/>
</dbReference>
<dbReference type="Proteomes" id="UP000000763">
    <property type="component" value="Chromosome 12"/>
</dbReference>
<dbReference type="Proteomes" id="UP000007752">
    <property type="component" value="Chromosome 12"/>
</dbReference>
<dbReference type="Proteomes" id="UP000059680">
    <property type="component" value="Chromosome 12"/>
</dbReference>
<dbReference type="GO" id="GO:0005634">
    <property type="term" value="C:nucleus"/>
    <property type="evidence" value="ECO:0000318"/>
    <property type="project" value="GO_Central"/>
</dbReference>
<dbReference type="GO" id="GO:0051287">
    <property type="term" value="F:NAD binding"/>
    <property type="evidence" value="ECO:0007669"/>
    <property type="project" value="InterPro"/>
</dbReference>
<dbReference type="GO" id="GO:0003979">
    <property type="term" value="F:UDP-glucose 6-dehydrogenase activity"/>
    <property type="evidence" value="ECO:0007669"/>
    <property type="project" value="UniProtKB-EC"/>
</dbReference>
<dbReference type="GO" id="GO:0006024">
    <property type="term" value="P:glycosaminoglycan biosynthetic process"/>
    <property type="evidence" value="ECO:0000318"/>
    <property type="project" value="GO_Central"/>
</dbReference>
<dbReference type="GO" id="GO:0006065">
    <property type="term" value="P:UDP-glucuronate biosynthetic process"/>
    <property type="evidence" value="ECO:0007669"/>
    <property type="project" value="UniProtKB-UniPathway"/>
</dbReference>
<dbReference type="FunFam" id="1.20.5.100:FF:000001">
    <property type="entry name" value="UDP-glucose 6-dehydrogenase"/>
    <property type="match status" value="1"/>
</dbReference>
<dbReference type="FunFam" id="3.40.50.720:FF:000032">
    <property type="entry name" value="UDP-glucose 6-dehydrogenase"/>
    <property type="match status" value="1"/>
</dbReference>
<dbReference type="FunFam" id="3.40.50.720:FF:000089">
    <property type="entry name" value="UDP-glucose 6-dehydrogenase"/>
    <property type="match status" value="1"/>
</dbReference>
<dbReference type="Gene3D" id="1.20.5.100">
    <property type="entry name" value="Cytochrome c1, transmembrane anchor, C-terminal"/>
    <property type="match status" value="1"/>
</dbReference>
<dbReference type="Gene3D" id="3.40.50.720">
    <property type="entry name" value="NAD(P)-binding Rossmann-like Domain"/>
    <property type="match status" value="2"/>
</dbReference>
<dbReference type="InterPro" id="IPR008927">
    <property type="entry name" value="6-PGluconate_DH-like_C_sf"/>
</dbReference>
<dbReference type="InterPro" id="IPR036291">
    <property type="entry name" value="NAD(P)-bd_dom_sf"/>
</dbReference>
<dbReference type="InterPro" id="IPR017476">
    <property type="entry name" value="UDP-Glc/GDP-Man"/>
</dbReference>
<dbReference type="InterPro" id="IPR014027">
    <property type="entry name" value="UDP-Glc/GDP-Man_DH_C"/>
</dbReference>
<dbReference type="InterPro" id="IPR036220">
    <property type="entry name" value="UDP-Glc/GDP-Man_DH_C_sf"/>
</dbReference>
<dbReference type="InterPro" id="IPR014026">
    <property type="entry name" value="UDP-Glc/GDP-Man_DH_dimer"/>
</dbReference>
<dbReference type="InterPro" id="IPR001732">
    <property type="entry name" value="UDP-Glc/GDP-Man_DH_N"/>
</dbReference>
<dbReference type="InterPro" id="IPR028356">
    <property type="entry name" value="UDPglc_DH_euk"/>
</dbReference>
<dbReference type="NCBIfam" id="TIGR03026">
    <property type="entry name" value="NDP-sugDHase"/>
    <property type="match status" value="1"/>
</dbReference>
<dbReference type="PANTHER" id="PTHR11374:SF3">
    <property type="entry name" value="UDP-GLUCOSE 6-DEHYDROGENASE"/>
    <property type="match status" value="1"/>
</dbReference>
<dbReference type="PANTHER" id="PTHR11374">
    <property type="entry name" value="UDP-GLUCOSE DEHYDROGENASE/UDP-MANNAC DEHYDROGENASE"/>
    <property type="match status" value="1"/>
</dbReference>
<dbReference type="Pfam" id="PF00984">
    <property type="entry name" value="UDPG_MGDP_dh"/>
    <property type="match status" value="1"/>
</dbReference>
<dbReference type="Pfam" id="PF03720">
    <property type="entry name" value="UDPG_MGDP_dh_C"/>
    <property type="match status" value="1"/>
</dbReference>
<dbReference type="Pfam" id="PF03721">
    <property type="entry name" value="UDPG_MGDP_dh_N"/>
    <property type="match status" value="1"/>
</dbReference>
<dbReference type="PIRSF" id="PIRSF500133">
    <property type="entry name" value="UDPglc_DH_euk"/>
    <property type="match status" value="1"/>
</dbReference>
<dbReference type="PIRSF" id="PIRSF000124">
    <property type="entry name" value="UDPglc_GDPman_dh"/>
    <property type="match status" value="1"/>
</dbReference>
<dbReference type="SMART" id="SM00984">
    <property type="entry name" value="UDPG_MGDP_dh_C"/>
    <property type="match status" value="1"/>
</dbReference>
<dbReference type="SUPFAM" id="SSF48179">
    <property type="entry name" value="6-phosphogluconate dehydrogenase C-terminal domain-like"/>
    <property type="match status" value="1"/>
</dbReference>
<dbReference type="SUPFAM" id="SSF51735">
    <property type="entry name" value="NAD(P)-binding Rossmann-fold domains"/>
    <property type="match status" value="1"/>
</dbReference>
<dbReference type="SUPFAM" id="SSF52413">
    <property type="entry name" value="UDP-glucose/GDP-mannose dehydrogenase C-terminal domain"/>
    <property type="match status" value="1"/>
</dbReference>
<protein>
    <recommendedName>
        <fullName>UDP-glucose 6-dehydrogenase 5</fullName>
        <shortName>UDP-Glc dehydrogenase 5</shortName>
        <shortName>UDP-GlcDH 5</shortName>
        <shortName>UDPGDH 5</shortName>
        <ecNumber>1.1.1.22</ecNumber>
    </recommendedName>
    <alternativeName>
        <fullName>Os-UGD5</fullName>
    </alternativeName>
</protein>
<evidence type="ECO:0000250" key="1"/>
<evidence type="ECO:0000305" key="2"/>
<name>UGDH5_ORYSJ</name>
<reference key="1">
    <citation type="journal article" date="2005" name="BMC Biol.">
        <title>The sequence of rice chromosomes 11 and 12, rich in disease resistance genes and recent gene duplications.</title>
        <authorList>
            <consortium name="The rice chromosomes 11 and 12 sequencing consortia"/>
        </authorList>
    </citation>
    <scope>NUCLEOTIDE SEQUENCE [LARGE SCALE GENOMIC DNA]</scope>
    <source>
        <strain>cv. Nipponbare</strain>
    </source>
</reference>
<reference key="2">
    <citation type="journal article" date="2005" name="Nature">
        <title>The map-based sequence of the rice genome.</title>
        <authorList>
            <consortium name="International rice genome sequencing project (IRGSP)"/>
        </authorList>
    </citation>
    <scope>NUCLEOTIDE SEQUENCE [LARGE SCALE GENOMIC DNA]</scope>
    <source>
        <strain>cv. Nipponbare</strain>
    </source>
</reference>
<reference key="3">
    <citation type="journal article" date="2008" name="Nucleic Acids Res.">
        <title>The rice annotation project database (RAP-DB): 2008 update.</title>
        <authorList>
            <consortium name="The rice annotation project (RAP)"/>
        </authorList>
    </citation>
    <scope>GENOME REANNOTATION</scope>
    <source>
        <strain>cv. Nipponbare</strain>
    </source>
</reference>
<reference key="4">
    <citation type="journal article" date="2013" name="Rice">
        <title>Improvement of the Oryza sativa Nipponbare reference genome using next generation sequence and optical map data.</title>
        <authorList>
            <person name="Kawahara Y."/>
            <person name="de la Bastide M."/>
            <person name="Hamilton J.P."/>
            <person name="Kanamori H."/>
            <person name="McCombie W.R."/>
            <person name="Ouyang S."/>
            <person name="Schwartz D.C."/>
            <person name="Tanaka T."/>
            <person name="Wu J."/>
            <person name="Zhou S."/>
            <person name="Childs K.L."/>
            <person name="Davidson R.M."/>
            <person name="Lin H."/>
            <person name="Quesada-Ocampo L."/>
            <person name="Vaillancourt B."/>
            <person name="Sakai H."/>
            <person name="Lee S.S."/>
            <person name="Kim J."/>
            <person name="Numa H."/>
            <person name="Itoh T."/>
            <person name="Buell C.R."/>
            <person name="Matsumoto T."/>
        </authorList>
    </citation>
    <scope>GENOME REANNOTATION</scope>
    <source>
        <strain>cv. Nipponbare</strain>
    </source>
</reference>
<reference key="5">
    <citation type="journal article" date="2005" name="PLoS Biol.">
        <title>The genomes of Oryza sativa: a history of duplications.</title>
        <authorList>
            <person name="Yu J."/>
            <person name="Wang J."/>
            <person name="Lin W."/>
            <person name="Li S."/>
            <person name="Li H."/>
            <person name="Zhou J."/>
            <person name="Ni P."/>
            <person name="Dong W."/>
            <person name="Hu S."/>
            <person name="Zeng C."/>
            <person name="Zhang J."/>
            <person name="Zhang Y."/>
            <person name="Li R."/>
            <person name="Xu Z."/>
            <person name="Li S."/>
            <person name="Li X."/>
            <person name="Zheng H."/>
            <person name="Cong L."/>
            <person name="Lin L."/>
            <person name="Yin J."/>
            <person name="Geng J."/>
            <person name="Li G."/>
            <person name="Shi J."/>
            <person name="Liu J."/>
            <person name="Lv H."/>
            <person name="Li J."/>
            <person name="Wang J."/>
            <person name="Deng Y."/>
            <person name="Ran L."/>
            <person name="Shi X."/>
            <person name="Wang X."/>
            <person name="Wu Q."/>
            <person name="Li C."/>
            <person name="Ren X."/>
            <person name="Wang J."/>
            <person name="Wang X."/>
            <person name="Li D."/>
            <person name="Liu D."/>
            <person name="Zhang X."/>
            <person name="Ji Z."/>
            <person name="Zhao W."/>
            <person name="Sun Y."/>
            <person name="Zhang Z."/>
            <person name="Bao J."/>
            <person name="Han Y."/>
            <person name="Dong L."/>
            <person name="Ji J."/>
            <person name="Chen P."/>
            <person name="Wu S."/>
            <person name="Liu J."/>
            <person name="Xiao Y."/>
            <person name="Bu D."/>
            <person name="Tan J."/>
            <person name="Yang L."/>
            <person name="Ye C."/>
            <person name="Zhang J."/>
            <person name="Xu J."/>
            <person name="Zhou Y."/>
            <person name="Yu Y."/>
            <person name="Zhang B."/>
            <person name="Zhuang S."/>
            <person name="Wei H."/>
            <person name="Liu B."/>
            <person name="Lei M."/>
            <person name="Yu H."/>
            <person name="Li Y."/>
            <person name="Xu H."/>
            <person name="Wei S."/>
            <person name="He X."/>
            <person name="Fang L."/>
            <person name="Zhang Z."/>
            <person name="Zhang Y."/>
            <person name="Huang X."/>
            <person name="Su Z."/>
            <person name="Tong W."/>
            <person name="Li J."/>
            <person name="Tong Z."/>
            <person name="Li S."/>
            <person name="Ye J."/>
            <person name="Wang L."/>
            <person name="Fang L."/>
            <person name="Lei T."/>
            <person name="Chen C.-S."/>
            <person name="Chen H.-C."/>
            <person name="Xu Z."/>
            <person name="Li H."/>
            <person name="Huang H."/>
            <person name="Zhang F."/>
            <person name="Xu H."/>
            <person name="Li N."/>
            <person name="Zhao C."/>
            <person name="Li S."/>
            <person name="Dong L."/>
            <person name="Huang Y."/>
            <person name="Li L."/>
            <person name="Xi Y."/>
            <person name="Qi Q."/>
            <person name="Li W."/>
            <person name="Zhang B."/>
            <person name="Hu W."/>
            <person name="Zhang Y."/>
            <person name="Tian X."/>
            <person name="Jiao Y."/>
            <person name="Liang X."/>
            <person name="Jin J."/>
            <person name="Gao L."/>
            <person name="Zheng W."/>
            <person name="Hao B."/>
            <person name="Liu S.-M."/>
            <person name="Wang W."/>
            <person name="Yuan L."/>
            <person name="Cao M."/>
            <person name="McDermott J."/>
            <person name="Samudrala R."/>
            <person name="Wang J."/>
            <person name="Wong G.K.-S."/>
            <person name="Yang H."/>
        </authorList>
    </citation>
    <scope>NUCLEOTIDE SEQUENCE [LARGE SCALE GENOMIC DNA]</scope>
    <source>
        <strain>cv. Nipponbare</strain>
    </source>
</reference>
<reference key="6">
    <citation type="journal article" date="2003" name="Science">
        <title>Collection, mapping, and annotation of over 28,000 cDNA clones from japonica rice.</title>
        <authorList>
            <consortium name="The rice full-length cDNA consortium"/>
        </authorList>
    </citation>
    <scope>NUCLEOTIDE SEQUENCE [LARGE SCALE MRNA]</scope>
    <source>
        <strain>cv. Nipponbare</strain>
    </source>
</reference>
<reference key="7">
    <citation type="journal article" date="2007" name="J. Exp. Bot.">
        <title>Genome-wide analysis of the UDP-glucose dehydrogenase gene family in Arabidopsis, a key enzyme for matrix polysaccharides in cell walls.</title>
        <authorList>
            <person name="Klinghammer M."/>
            <person name="Tenhaken R."/>
        </authorList>
    </citation>
    <scope>GENE FAMILY</scope>
    <scope>NOMENCLATURE</scope>
</reference>
<gene>
    <name type="primary">UGD5</name>
    <name type="ordered locus">Os12g0443600</name>
    <name type="ordered locus">LOC_Os12g25700</name>
    <name type="ORF">OsJ_35986</name>
</gene>
<organism>
    <name type="scientific">Oryza sativa subsp. japonica</name>
    <name type="common">Rice</name>
    <dbReference type="NCBI Taxonomy" id="39947"/>
    <lineage>
        <taxon>Eukaryota</taxon>
        <taxon>Viridiplantae</taxon>
        <taxon>Streptophyta</taxon>
        <taxon>Embryophyta</taxon>
        <taxon>Tracheophyta</taxon>
        <taxon>Spermatophyta</taxon>
        <taxon>Magnoliopsida</taxon>
        <taxon>Liliopsida</taxon>
        <taxon>Poales</taxon>
        <taxon>Poaceae</taxon>
        <taxon>BOP clade</taxon>
        <taxon>Oryzoideae</taxon>
        <taxon>Oryzeae</taxon>
        <taxon>Oryzinae</taxon>
        <taxon>Oryza</taxon>
        <taxon>Oryza sativa</taxon>
    </lineage>
</organism>
<feature type="chain" id="PRO_0000422271" description="UDP-glucose 6-dehydrogenase 5">
    <location>
        <begin position="1"/>
        <end position="480"/>
    </location>
</feature>
<feature type="active site" description="Nucleophile" evidence="1">
    <location>
        <position position="272"/>
    </location>
</feature>
<feature type="binding site" evidence="1">
    <location>
        <begin position="8"/>
        <end position="13"/>
    </location>
    <ligand>
        <name>NAD(+)</name>
        <dbReference type="ChEBI" id="CHEBI:57540"/>
    </ligand>
</feature>
<feature type="binding site" evidence="1">
    <location>
        <position position="33"/>
    </location>
    <ligand>
        <name>NAD(+)</name>
        <dbReference type="ChEBI" id="CHEBI:57540"/>
    </ligand>
</feature>
<feature type="binding site" evidence="1">
    <location>
        <position position="38"/>
    </location>
    <ligand>
        <name>NAD(+)</name>
        <dbReference type="ChEBI" id="CHEBI:57540"/>
    </ligand>
</feature>
<feature type="binding site" evidence="1">
    <location>
        <begin position="86"/>
        <end position="90"/>
    </location>
    <ligand>
        <name>NAD(+)</name>
        <dbReference type="ChEBI" id="CHEBI:57540"/>
    </ligand>
</feature>
<feature type="binding site" evidence="1">
    <location>
        <begin position="127"/>
        <end position="128"/>
    </location>
    <ligand>
        <name>NAD(+)</name>
        <dbReference type="ChEBI" id="CHEBI:57540"/>
    </ligand>
</feature>
<feature type="binding site" evidence="1">
    <location>
        <begin position="157"/>
        <end position="161"/>
    </location>
    <ligand>
        <name>substrate</name>
    </ligand>
</feature>
<feature type="binding site" evidence="1">
    <location>
        <position position="161"/>
    </location>
    <ligand>
        <name>NAD(+)</name>
        <dbReference type="ChEBI" id="CHEBI:57540"/>
    </ligand>
</feature>
<feature type="binding site" evidence="1">
    <location>
        <begin position="216"/>
        <end position="223"/>
    </location>
    <ligand>
        <name>substrate</name>
    </ligand>
</feature>
<feature type="binding site" evidence="1">
    <location>
        <begin position="256"/>
        <end position="269"/>
    </location>
    <ligand>
        <name>substrate</name>
    </ligand>
</feature>
<feature type="binding site" evidence="1">
    <location>
        <begin position="272"/>
        <end position="275"/>
    </location>
    <ligand>
        <name>NAD(+)</name>
        <dbReference type="ChEBI" id="CHEBI:57540"/>
    </ligand>
</feature>
<feature type="binding site" evidence="1">
    <location>
        <begin position="334"/>
        <end position="335"/>
    </location>
    <ligand>
        <name>substrate</name>
    </ligand>
</feature>
<feature type="binding site" evidence="1">
    <location>
        <position position="342"/>
    </location>
    <ligand>
        <name>NAD(+)</name>
        <dbReference type="ChEBI" id="CHEBI:57540"/>
    </ligand>
</feature>
<feature type="binding site" evidence="1">
    <location>
        <position position="447"/>
    </location>
    <ligand>
        <name>substrate</name>
    </ligand>
</feature>
<feature type="modified residue" description="Phosphoserine" evidence="1">
    <location>
        <position position="393"/>
    </location>
</feature>
<comment type="function">
    <text evidence="1">Involved in the biosynthesis of UDP-glucuronic acid (UDP-GlcA), providing nucleotide sugars for cell-wall polymers.</text>
</comment>
<comment type="catalytic activity">
    <reaction>
        <text>UDP-alpha-D-glucose + 2 NAD(+) + H2O = UDP-alpha-D-glucuronate + 2 NADH + 3 H(+)</text>
        <dbReference type="Rhea" id="RHEA:23596"/>
        <dbReference type="ChEBI" id="CHEBI:15377"/>
        <dbReference type="ChEBI" id="CHEBI:15378"/>
        <dbReference type="ChEBI" id="CHEBI:57540"/>
        <dbReference type="ChEBI" id="CHEBI:57945"/>
        <dbReference type="ChEBI" id="CHEBI:58052"/>
        <dbReference type="ChEBI" id="CHEBI:58885"/>
        <dbReference type="EC" id="1.1.1.22"/>
    </reaction>
</comment>
<comment type="pathway">
    <text>Nucleotide-sugar biosynthesis; UDP-alpha-D-glucuronate biosynthesis; UDP-alpha-D-glucuronate from UDP-alpha-D-glucose: step 1/1.</text>
</comment>
<comment type="similarity">
    <text evidence="2">Belongs to the UDP-glucose/GDP-mannose dehydrogenase family.</text>
</comment>
<proteinExistence type="evidence at transcript level"/>
<sequence length="480" mass="52919">MVKICCIGAGYVGGPTMAVIALKCPAIEVVVVDISKPRVDAWNSDQLPIYEPGLDEVVKECRGRNLFFSTDVEKHVAEADIIFVSVNTPTKTRGLGAGKAADLTYWESAARMIADVSKSDKIVVEKSTVPVKTAEAIEKILTHNSKGINYQILSNPEFLAEGTAIEDLFKPDRVLIGGRETPEGKKAVQALKEVYAHWVPEDRIITTNLWSAELSKLAANAFLAQRISSVNAISALCEATGANVSEVAYAVGKDTRIGPKFLNASVGFGGSCFQKDILNLVYICECNGLPEVANYWKQVIKINDYQKSRFVNRVVASMFNTVSGKKIAVLGFAFKKDTGDTRETPAIDVCHGLLGDKAQISIYDPQVTEDQIQRDLSMAKFDWDHPRHLQPTSPTAFKQVSVVWDAYEATKGAHGLCILTEWDEFKTLDYQRIFDNMQKPAFVFDGRNVVDPEKLREIGFIVYSIGKPLDAWLKDMPAVA</sequence>